<evidence type="ECO:0000250" key="1">
    <source>
        <dbReference type="UniProtKB" id="O60896"/>
    </source>
</evidence>
<evidence type="ECO:0000255" key="2"/>
<evidence type="ECO:0000305" key="3"/>
<dbReference type="EMBL" id="AY236155">
    <property type="protein sequence ID" value="AAP37948.1"/>
    <property type="molecule type" value="Genomic_DNA"/>
</dbReference>
<dbReference type="EMBL" id="AY236153">
    <property type="protein sequence ID" value="AAP37948.1"/>
    <property type="status" value="JOINED"/>
    <property type="molecule type" value="Genomic_DNA"/>
</dbReference>
<dbReference type="EMBL" id="AY236154">
    <property type="protein sequence ID" value="AAP37948.1"/>
    <property type="status" value="JOINED"/>
    <property type="molecule type" value="Genomic_DNA"/>
</dbReference>
<dbReference type="EMBL" id="AY236156">
    <property type="protein sequence ID" value="AAP37949.1"/>
    <property type="molecule type" value="mRNA"/>
</dbReference>
<dbReference type="EMBL" id="AB090165">
    <property type="protein sequence ID" value="BAC54963.1"/>
    <property type="molecule type" value="mRNA"/>
</dbReference>
<dbReference type="RefSeq" id="NP_999254.1">
    <property type="nucleotide sequence ID" value="NM_214089.1"/>
</dbReference>
<dbReference type="SMR" id="Q7YS88"/>
<dbReference type="FunCoup" id="Q7YS88">
    <property type="interactions" value="395"/>
</dbReference>
<dbReference type="STRING" id="9823.ENSSSCP00000046054"/>
<dbReference type="GlyCosmos" id="Q7YS88">
    <property type="glycosylation" value="2 sites, No reported glycans"/>
</dbReference>
<dbReference type="GlyGen" id="Q7YS88">
    <property type="glycosylation" value="2 sites"/>
</dbReference>
<dbReference type="GeneID" id="397163"/>
<dbReference type="KEGG" id="ssc:397163"/>
<dbReference type="CTD" id="10268"/>
<dbReference type="InParanoid" id="Q7YS88"/>
<dbReference type="OrthoDB" id="9940331at2759"/>
<dbReference type="Proteomes" id="UP000008227">
    <property type="component" value="Unplaced"/>
</dbReference>
<dbReference type="Proteomes" id="UP000314985">
    <property type="component" value="Unplaced"/>
</dbReference>
<dbReference type="Proteomes" id="UP000694570">
    <property type="component" value="Unplaced"/>
</dbReference>
<dbReference type="Proteomes" id="UP000694571">
    <property type="component" value="Unplaced"/>
</dbReference>
<dbReference type="Proteomes" id="UP000694720">
    <property type="component" value="Unplaced"/>
</dbReference>
<dbReference type="Proteomes" id="UP000694722">
    <property type="component" value="Unplaced"/>
</dbReference>
<dbReference type="Proteomes" id="UP000694723">
    <property type="component" value="Unplaced"/>
</dbReference>
<dbReference type="Proteomes" id="UP000694724">
    <property type="component" value="Unplaced"/>
</dbReference>
<dbReference type="Proteomes" id="UP000694725">
    <property type="component" value="Unplaced"/>
</dbReference>
<dbReference type="Proteomes" id="UP000694726">
    <property type="component" value="Unplaced"/>
</dbReference>
<dbReference type="Proteomes" id="UP000694727">
    <property type="component" value="Unplaced"/>
</dbReference>
<dbReference type="Proteomes" id="UP000694728">
    <property type="component" value="Unplaced"/>
</dbReference>
<dbReference type="GO" id="GO:0009986">
    <property type="term" value="C:cell surface"/>
    <property type="evidence" value="ECO:0000318"/>
    <property type="project" value="GO_Central"/>
</dbReference>
<dbReference type="GO" id="GO:0005886">
    <property type="term" value="C:plasma membrane"/>
    <property type="evidence" value="ECO:0000250"/>
    <property type="project" value="UniProtKB"/>
</dbReference>
<dbReference type="GO" id="GO:0043235">
    <property type="term" value="C:receptor complex"/>
    <property type="evidence" value="ECO:0000318"/>
    <property type="project" value="GO_Central"/>
</dbReference>
<dbReference type="GO" id="GO:0015026">
    <property type="term" value="F:coreceptor activity"/>
    <property type="evidence" value="ECO:0000318"/>
    <property type="project" value="GO_Central"/>
</dbReference>
<dbReference type="GO" id="GO:0007189">
    <property type="term" value="P:adenylate cyclase-activating G protein-coupled receptor signaling pathway"/>
    <property type="evidence" value="ECO:0000353"/>
    <property type="project" value="UniProtKB"/>
</dbReference>
<dbReference type="GO" id="GO:1990410">
    <property type="term" value="P:adrenomedullin receptor signaling pathway"/>
    <property type="evidence" value="ECO:0000353"/>
    <property type="project" value="UniProtKB"/>
</dbReference>
<dbReference type="GO" id="GO:0006816">
    <property type="term" value="P:calcium ion transport"/>
    <property type="evidence" value="ECO:0000318"/>
    <property type="project" value="GO_Central"/>
</dbReference>
<dbReference type="GO" id="GO:0071392">
    <property type="term" value="P:cellular response to estradiol stimulus"/>
    <property type="evidence" value="ECO:0000250"/>
    <property type="project" value="UniProtKB"/>
</dbReference>
<dbReference type="GO" id="GO:0032870">
    <property type="term" value="P:cellular response to hormone stimulus"/>
    <property type="evidence" value="ECO:0000318"/>
    <property type="project" value="GO_Central"/>
</dbReference>
<dbReference type="GO" id="GO:0007186">
    <property type="term" value="P:G protein-coupled receptor signaling pathway"/>
    <property type="evidence" value="ECO:0000318"/>
    <property type="project" value="GO_Central"/>
</dbReference>
<dbReference type="GO" id="GO:0086103">
    <property type="term" value="P:G protein-coupled receptor signaling pathway involved in heart process"/>
    <property type="evidence" value="ECO:0000250"/>
    <property type="project" value="UniProtKB"/>
</dbReference>
<dbReference type="GO" id="GO:0006886">
    <property type="term" value="P:intracellular protein transport"/>
    <property type="evidence" value="ECO:0007669"/>
    <property type="project" value="InterPro"/>
</dbReference>
<dbReference type="GO" id="GO:1903078">
    <property type="term" value="P:positive regulation of protein localization to plasma membrane"/>
    <property type="evidence" value="ECO:0000250"/>
    <property type="project" value="UniProtKB"/>
</dbReference>
<dbReference type="GO" id="GO:0072659">
    <property type="term" value="P:protein localization to plasma membrane"/>
    <property type="evidence" value="ECO:0000318"/>
    <property type="project" value="GO_Central"/>
</dbReference>
<dbReference type="GO" id="GO:0015031">
    <property type="term" value="P:protein transport"/>
    <property type="evidence" value="ECO:0000318"/>
    <property type="project" value="GO_Central"/>
</dbReference>
<dbReference type="GO" id="GO:0031623">
    <property type="term" value="P:receptor internalization"/>
    <property type="evidence" value="ECO:0000318"/>
    <property type="project" value="GO_Central"/>
</dbReference>
<dbReference type="GO" id="GO:0008277">
    <property type="term" value="P:regulation of G protein-coupled receptor signaling pathway"/>
    <property type="evidence" value="ECO:0007669"/>
    <property type="project" value="InterPro"/>
</dbReference>
<dbReference type="FunFam" id="1.10.150.510:FF:000001">
    <property type="entry name" value="Receptor activity modifying protein 3"/>
    <property type="match status" value="1"/>
</dbReference>
<dbReference type="Gene3D" id="1.10.150.510">
    <property type="entry name" value="Receptor activity modifying family"/>
    <property type="match status" value="1"/>
</dbReference>
<dbReference type="InterPro" id="IPR006985">
    <property type="entry name" value="RAMP"/>
</dbReference>
<dbReference type="InterPro" id="IPR038126">
    <property type="entry name" value="RAMP_sf"/>
</dbReference>
<dbReference type="PANTHER" id="PTHR14076">
    <property type="entry name" value="RECEPTOR ACTIVITY MODIFYING PROTEIN RAMP"/>
    <property type="match status" value="1"/>
</dbReference>
<dbReference type="PANTHER" id="PTHR14076:SF2">
    <property type="entry name" value="RECEPTOR ACTIVITY-MODIFYING PROTEIN 3"/>
    <property type="match status" value="1"/>
</dbReference>
<dbReference type="Pfam" id="PF04901">
    <property type="entry name" value="RAMP"/>
    <property type="match status" value="1"/>
</dbReference>
<feature type="signal peptide" evidence="2">
    <location>
        <begin position="1"/>
        <end position="30"/>
    </location>
</feature>
<feature type="chain" id="PRO_0000250475" description="Receptor activity-modifying protein 3">
    <location>
        <begin position="31"/>
        <end position="151"/>
    </location>
</feature>
<feature type="topological domain" description="Extracellular" evidence="2">
    <location>
        <begin position="31"/>
        <end position="116"/>
    </location>
</feature>
<feature type="transmembrane region" description="Helical" evidence="1">
    <location>
        <begin position="117"/>
        <end position="141"/>
    </location>
</feature>
<feature type="topological domain" description="Cytoplasmic" evidence="2">
    <location>
        <begin position="142"/>
        <end position="151"/>
    </location>
</feature>
<feature type="site" description="Required for CALCRL interaction" evidence="1">
    <location>
        <position position="116"/>
    </location>
</feature>
<feature type="site" description="Required for CALCRL interaction" evidence="1">
    <location>
        <position position="144"/>
    </location>
</feature>
<feature type="glycosylation site" description="N-linked (GlcNAc...) asparagine" evidence="2">
    <location>
        <position position="61"/>
    </location>
</feature>
<feature type="glycosylation site" description="N-linked (GlcNAc...) asparagine" evidence="2">
    <location>
        <position position="106"/>
    </location>
</feature>
<feature type="disulfide bond" evidence="1">
    <location>
        <begin position="43"/>
        <end position="75"/>
    </location>
</feature>
<feature type="disulfide bond" evidence="1">
    <location>
        <begin position="60"/>
        <end position="107"/>
    </location>
</feature>
<feature type="sequence conflict" description="In Ref. 2; BAC54963." evidence="3" ref="2">
    <original>H</original>
    <variation>Y</variation>
    <location>
        <position position="103"/>
    </location>
</feature>
<proteinExistence type="evidence at transcript level"/>
<gene>
    <name type="primary">RAMP3</name>
</gene>
<accession>Q7YS88</accession>
<accession>Q7YS89</accession>
<accession>Q867B8</accession>
<name>RAMP3_PIG</name>
<sequence>MEATAPRRRHLLPLLLLLLLLCGECPPVSGCNEKRMLAMLPRCGKTFAEMMKKVEVWKWCNLSEFIVYYESFTNCTEVETNVVGCYWPNPLAQSFITGVHRRHFHNCSVDRQQWQDPPDEILIPLIVVPILLTLAMTGLVVWRSKRAAQVV</sequence>
<reference key="1">
    <citation type="journal article" date="2003" name="Biochim. Biophys. Acta">
        <title>Pig whey acidic protein gene is surrounded by two ubiquitously expressed genes.</title>
        <authorList>
            <person name="Rival-Gervier S."/>
            <person name="Thepot D."/>
            <person name="Jolivet G."/>
            <person name="Houdebine L.-M."/>
        </authorList>
    </citation>
    <scope>NUCLEOTIDE SEQUENCE [GENOMIC DNA / MRNA]</scope>
</reference>
<reference key="2">
    <citation type="submission" date="2002-08" db="EMBL/GenBank/DDBJ databases">
        <title>Specificity of porcine calcitonin receptor and calcitonin receptor-like receptor in the presence of receptor-activity-modifying proteins.</title>
        <authorList>
            <person name="Kikumoto K."/>
            <person name="Katafuchi T."/>
            <person name="Minamino N."/>
        </authorList>
    </citation>
    <scope>NUCLEOTIDE SEQUENCE [MRNA]</scope>
</reference>
<protein>
    <recommendedName>
        <fullName>Receptor activity-modifying protein 3</fullName>
    </recommendedName>
</protein>
<keyword id="KW-1003">Cell membrane</keyword>
<keyword id="KW-1015">Disulfide bond</keyword>
<keyword id="KW-0325">Glycoprotein</keyword>
<keyword id="KW-0472">Membrane</keyword>
<keyword id="KW-0675">Receptor</keyword>
<keyword id="KW-1185">Reference proteome</keyword>
<keyword id="KW-0732">Signal</keyword>
<keyword id="KW-0812">Transmembrane</keyword>
<keyword id="KW-1133">Transmembrane helix</keyword>
<keyword id="KW-0813">Transport</keyword>
<comment type="function">
    <text evidence="1">Accessory protein that interacts with and modulates the function of G-protein coupled receptors including calcitonin gene-related peptide type 1 receptor (CALCRL), calcitonin receptor (CALCR) and G-protein coupled estrogen receptor 1 (GPER1). Required for the transport of CALCRL and GPER1 receptors to the plasma membrane. Plays a role in cardioprotection by reducing cardiac hypertrophy and perivascular fibrosis in a GPER1-dependent manner. Together with CALCRL, form a receptor complex for adrenomedullin/ADM and intermedin/ADM2. Together with CALCR, act as a receptor complex for amylin/IAPP.</text>
</comment>
<comment type="subunit">
    <text evidence="1">Heterodimer of CALCRL and RAMP3; interaction induces allosteric modulation of CALCRL function and ligand specificity for adrenomedullin/ADM and intermedin/ADM2. Heterodimer of CALCR and RAMP3; interaction form the receptor complex AMYR3 for amylin/IAPP. Interacts with GPER1.</text>
</comment>
<comment type="subcellular location">
    <subcellularLocation>
        <location evidence="1">Cell membrane</location>
        <topology evidence="1">Single-pass type I membrane protein</topology>
    </subcellularLocation>
    <subcellularLocation>
        <location evidence="1">Membrane</location>
        <topology evidence="1">Single-pass type I membrane protein</topology>
    </subcellularLocation>
    <text evidence="1">Moves from intracellular puncta to the plasma membrane in a RAMP3-dependent manner.</text>
</comment>
<comment type="similarity">
    <text evidence="3">Belongs to the RAMP family.</text>
</comment>
<organism>
    <name type="scientific">Sus scrofa</name>
    <name type="common">Pig</name>
    <dbReference type="NCBI Taxonomy" id="9823"/>
    <lineage>
        <taxon>Eukaryota</taxon>
        <taxon>Metazoa</taxon>
        <taxon>Chordata</taxon>
        <taxon>Craniata</taxon>
        <taxon>Vertebrata</taxon>
        <taxon>Euteleostomi</taxon>
        <taxon>Mammalia</taxon>
        <taxon>Eutheria</taxon>
        <taxon>Laurasiatheria</taxon>
        <taxon>Artiodactyla</taxon>
        <taxon>Suina</taxon>
        <taxon>Suidae</taxon>
        <taxon>Sus</taxon>
    </lineage>
</organism>